<dbReference type="EC" id="6.1.1.11" evidence="1"/>
<dbReference type="EMBL" id="CP001620">
    <property type="protein sequence ID" value="ACR17006.1"/>
    <property type="molecule type" value="Genomic_DNA"/>
</dbReference>
<dbReference type="RefSeq" id="WP_012730894.1">
    <property type="nucleotide sequence ID" value="NC_012704.1"/>
</dbReference>
<dbReference type="SMR" id="C4LGQ1"/>
<dbReference type="STRING" id="645127.ckrop_0214"/>
<dbReference type="KEGG" id="ckp:ckrop_0214"/>
<dbReference type="eggNOG" id="COG0172">
    <property type="taxonomic scope" value="Bacteria"/>
</dbReference>
<dbReference type="HOGENOM" id="CLU_023797_1_1_11"/>
<dbReference type="OrthoDB" id="9804647at2"/>
<dbReference type="UniPathway" id="UPA00906">
    <property type="reaction ID" value="UER00895"/>
</dbReference>
<dbReference type="Proteomes" id="UP000001473">
    <property type="component" value="Chromosome"/>
</dbReference>
<dbReference type="GO" id="GO:0005737">
    <property type="term" value="C:cytoplasm"/>
    <property type="evidence" value="ECO:0007669"/>
    <property type="project" value="UniProtKB-SubCell"/>
</dbReference>
<dbReference type="GO" id="GO:0005524">
    <property type="term" value="F:ATP binding"/>
    <property type="evidence" value="ECO:0007669"/>
    <property type="project" value="UniProtKB-UniRule"/>
</dbReference>
<dbReference type="GO" id="GO:0004828">
    <property type="term" value="F:serine-tRNA ligase activity"/>
    <property type="evidence" value="ECO:0007669"/>
    <property type="project" value="UniProtKB-UniRule"/>
</dbReference>
<dbReference type="GO" id="GO:0016260">
    <property type="term" value="P:selenocysteine biosynthetic process"/>
    <property type="evidence" value="ECO:0007669"/>
    <property type="project" value="UniProtKB-UniRule"/>
</dbReference>
<dbReference type="GO" id="GO:0006434">
    <property type="term" value="P:seryl-tRNA aminoacylation"/>
    <property type="evidence" value="ECO:0007669"/>
    <property type="project" value="UniProtKB-UniRule"/>
</dbReference>
<dbReference type="CDD" id="cd00770">
    <property type="entry name" value="SerRS_core"/>
    <property type="match status" value="1"/>
</dbReference>
<dbReference type="Gene3D" id="3.30.930.10">
    <property type="entry name" value="Bira Bifunctional Protein, Domain 2"/>
    <property type="match status" value="1"/>
</dbReference>
<dbReference type="Gene3D" id="1.10.287.40">
    <property type="entry name" value="Serine-tRNA synthetase, tRNA binding domain"/>
    <property type="match status" value="1"/>
</dbReference>
<dbReference type="HAMAP" id="MF_00176">
    <property type="entry name" value="Ser_tRNA_synth_type1"/>
    <property type="match status" value="1"/>
</dbReference>
<dbReference type="InterPro" id="IPR002314">
    <property type="entry name" value="aa-tRNA-synt_IIb"/>
</dbReference>
<dbReference type="InterPro" id="IPR006195">
    <property type="entry name" value="aa-tRNA-synth_II"/>
</dbReference>
<dbReference type="InterPro" id="IPR045864">
    <property type="entry name" value="aa-tRNA-synth_II/BPL/LPL"/>
</dbReference>
<dbReference type="InterPro" id="IPR002317">
    <property type="entry name" value="Ser-tRNA-ligase_type_1"/>
</dbReference>
<dbReference type="InterPro" id="IPR015866">
    <property type="entry name" value="Ser-tRNA-synth_1_N"/>
</dbReference>
<dbReference type="InterPro" id="IPR042103">
    <property type="entry name" value="SerRS_1_N_sf"/>
</dbReference>
<dbReference type="InterPro" id="IPR033729">
    <property type="entry name" value="SerRS_core"/>
</dbReference>
<dbReference type="InterPro" id="IPR010978">
    <property type="entry name" value="tRNA-bd_arm"/>
</dbReference>
<dbReference type="NCBIfam" id="TIGR00414">
    <property type="entry name" value="serS"/>
    <property type="match status" value="1"/>
</dbReference>
<dbReference type="PANTHER" id="PTHR11778">
    <property type="entry name" value="SERYL-TRNA SYNTHETASE"/>
    <property type="match status" value="1"/>
</dbReference>
<dbReference type="Pfam" id="PF02403">
    <property type="entry name" value="Seryl_tRNA_N"/>
    <property type="match status" value="1"/>
</dbReference>
<dbReference type="Pfam" id="PF00587">
    <property type="entry name" value="tRNA-synt_2b"/>
    <property type="match status" value="1"/>
</dbReference>
<dbReference type="PIRSF" id="PIRSF001529">
    <property type="entry name" value="Ser-tRNA-synth_IIa"/>
    <property type="match status" value="1"/>
</dbReference>
<dbReference type="PRINTS" id="PR00981">
    <property type="entry name" value="TRNASYNTHSER"/>
</dbReference>
<dbReference type="SUPFAM" id="SSF55681">
    <property type="entry name" value="Class II aaRS and biotin synthetases"/>
    <property type="match status" value="1"/>
</dbReference>
<dbReference type="SUPFAM" id="SSF46589">
    <property type="entry name" value="tRNA-binding arm"/>
    <property type="match status" value="1"/>
</dbReference>
<dbReference type="PROSITE" id="PS50862">
    <property type="entry name" value="AA_TRNA_LIGASE_II"/>
    <property type="match status" value="1"/>
</dbReference>
<comment type="function">
    <text evidence="1">Catalyzes the attachment of serine to tRNA(Ser). Is also able to aminoacylate tRNA(Sec) with serine, to form the misacylated tRNA L-seryl-tRNA(Sec), which will be further converted into selenocysteinyl-tRNA(Sec).</text>
</comment>
<comment type="catalytic activity">
    <reaction evidence="1">
        <text>tRNA(Ser) + L-serine + ATP = L-seryl-tRNA(Ser) + AMP + diphosphate + H(+)</text>
        <dbReference type="Rhea" id="RHEA:12292"/>
        <dbReference type="Rhea" id="RHEA-COMP:9669"/>
        <dbReference type="Rhea" id="RHEA-COMP:9703"/>
        <dbReference type="ChEBI" id="CHEBI:15378"/>
        <dbReference type="ChEBI" id="CHEBI:30616"/>
        <dbReference type="ChEBI" id="CHEBI:33019"/>
        <dbReference type="ChEBI" id="CHEBI:33384"/>
        <dbReference type="ChEBI" id="CHEBI:78442"/>
        <dbReference type="ChEBI" id="CHEBI:78533"/>
        <dbReference type="ChEBI" id="CHEBI:456215"/>
        <dbReference type="EC" id="6.1.1.11"/>
    </reaction>
</comment>
<comment type="catalytic activity">
    <reaction evidence="1">
        <text>tRNA(Sec) + L-serine + ATP = L-seryl-tRNA(Sec) + AMP + diphosphate + H(+)</text>
        <dbReference type="Rhea" id="RHEA:42580"/>
        <dbReference type="Rhea" id="RHEA-COMP:9742"/>
        <dbReference type="Rhea" id="RHEA-COMP:10128"/>
        <dbReference type="ChEBI" id="CHEBI:15378"/>
        <dbReference type="ChEBI" id="CHEBI:30616"/>
        <dbReference type="ChEBI" id="CHEBI:33019"/>
        <dbReference type="ChEBI" id="CHEBI:33384"/>
        <dbReference type="ChEBI" id="CHEBI:78442"/>
        <dbReference type="ChEBI" id="CHEBI:78533"/>
        <dbReference type="ChEBI" id="CHEBI:456215"/>
        <dbReference type="EC" id="6.1.1.11"/>
    </reaction>
</comment>
<comment type="pathway">
    <text evidence="1">Aminoacyl-tRNA biosynthesis; selenocysteinyl-tRNA(Sec) biosynthesis; L-seryl-tRNA(Sec) from L-serine and tRNA(Sec): step 1/1.</text>
</comment>
<comment type="subunit">
    <text evidence="1">Homodimer. The tRNA molecule binds across the dimer.</text>
</comment>
<comment type="subcellular location">
    <subcellularLocation>
        <location evidence="1">Cytoplasm</location>
    </subcellularLocation>
</comment>
<comment type="domain">
    <text evidence="1">Consists of two distinct domains, a catalytic core and a N-terminal extension that is involved in tRNA binding.</text>
</comment>
<comment type="similarity">
    <text evidence="1">Belongs to the class-II aminoacyl-tRNA synthetase family. Type-1 seryl-tRNA synthetase subfamily.</text>
</comment>
<accession>C4LGQ1</accession>
<organism>
    <name type="scientific">Corynebacterium kroppenstedtii (strain DSM 44385 / JCM 11950 / CIP 105744 / CCUG 35717)</name>
    <dbReference type="NCBI Taxonomy" id="645127"/>
    <lineage>
        <taxon>Bacteria</taxon>
        <taxon>Bacillati</taxon>
        <taxon>Actinomycetota</taxon>
        <taxon>Actinomycetes</taxon>
        <taxon>Mycobacteriales</taxon>
        <taxon>Corynebacteriaceae</taxon>
        <taxon>Corynebacterium</taxon>
    </lineage>
</organism>
<protein>
    <recommendedName>
        <fullName evidence="1">Serine--tRNA ligase</fullName>
        <ecNumber evidence="1">6.1.1.11</ecNumber>
    </recommendedName>
    <alternativeName>
        <fullName evidence="1">Seryl-tRNA synthetase</fullName>
        <shortName evidence="1">SerRS</shortName>
    </alternativeName>
    <alternativeName>
        <fullName evidence="1">Seryl-tRNA(Ser/Sec) synthetase</fullName>
    </alternativeName>
</protein>
<proteinExistence type="inferred from homology"/>
<name>SYS_CORK4</name>
<gene>
    <name evidence="1" type="primary">serS</name>
    <name type="ordered locus">ckrop_0214</name>
</gene>
<evidence type="ECO:0000255" key="1">
    <source>
        <dbReference type="HAMAP-Rule" id="MF_00176"/>
    </source>
</evidence>
<evidence type="ECO:0000256" key="2">
    <source>
        <dbReference type="SAM" id="MobiDB-lite"/>
    </source>
</evidence>
<reference key="1">
    <citation type="journal article" date="2008" name="J. Biotechnol.">
        <title>Ultrafast pyrosequencing of Corynebacterium kroppenstedtii DSM44385 revealed insights into the physiology of a lipophilic corynebacterium that lacks mycolic acids.</title>
        <authorList>
            <person name="Tauch A."/>
            <person name="Schneider J."/>
            <person name="Szczepanowski R."/>
            <person name="Tilker A."/>
            <person name="Viehoever P."/>
            <person name="Gartemann K.-H."/>
            <person name="Arnold W."/>
            <person name="Blom J."/>
            <person name="Brinkrolf K."/>
            <person name="Brune I."/>
            <person name="Goetker S."/>
            <person name="Weisshaar B."/>
            <person name="Goesmann A."/>
            <person name="Droege M."/>
            <person name="Puehler A."/>
        </authorList>
    </citation>
    <scope>NUCLEOTIDE SEQUENCE [LARGE SCALE GENOMIC DNA]</scope>
    <source>
        <strain>DSM 44385 / JCM 11950 / CIP 105744 / CCUG 35717</strain>
    </source>
</reference>
<feature type="chain" id="PRO_1000203750" description="Serine--tRNA ligase">
    <location>
        <begin position="1"/>
        <end position="423"/>
    </location>
</feature>
<feature type="region of interest" description="Disordered" evidence="2">
    <location>
        <begin position="1"/>
        <end position="71"/>
    </location>
</feature>
<feature type="compositionally biased region" description="Basic and acidic residues" evidence="2">
    <location>
        <begin position="1"/>
        <end position="24"/>
    </location>
</feature>
<feature type="compositionally biased region" description="Basic and acidic residues" evidence="2">
    <location>
        <begin position="62"/>
        <end position="71"/>
    </location>
</feature>
<feature type="binding site" evidence="1">
    <location>
        <begin position="230"/>
        <end position="232"/>
    </location>
    <ligand>
        <name>L-serine</name>
        <dbReference type="ChEBI" id="CHEBI:33384"/>
    </ligand>
</feature>
<feature type="binding site" evidence="1">
    <location>
        <begin position="261"/>
        <end position="263"/>
    </location>
    <ligand>
        <name>ATP</name>
        <dbReference type="ChEBI" id="CHEBI:30616"/>
    </ligand>
</feature>
<feature type="binding site" evidence="1">
    <location>
        <position position="277"/>
    </location>
    <ligand>
        <name>ATP</name>
        <dbReference type="ChEBI" id="CHEBI:30616"/>
    </ligand>
</feature>
<feature type="binding site" evidence="1">
    <location>
        <position position="284"/>
    </location>
    <ligand>
        <name>L-serine</name>
        <dbReference type="ChEBI" id="CHEBI:33384"/>
    </ligand>
</feature>
<feature type="binding site" evidence="1">
    <location>
        <begin position="348"/>
        <end position="351"/>
    </location>
    <ligand>
        <name>ATP</name>
        <dbReference type="ChEBI" id="CHEBI:30616"/>
    </ligand>
</feature>
<feature type="binding site" evidence="1">
    <location>
        <position position="383"/>
    </location>
    <ligand>
        <name>L-serine</name>
        <dbReference type="ChEBI" id="CHEBI:33384"/>
    </ligand>
</feature>
<keyword id="KW-0030">Aminoacyl-tRNA synthetase</keyword>
<keyword id="KW-0067">ATP-binding</keyword>
<keyword id="KW-0963">Cytoplasm</keyword>
<keyword id="KW-0436">Ligase</keyword>
<keyword id="KW-0547">Nucleotide-binding</keyword>
<keyword id="KW-0648">Protein biosynthesis</keyword>
<keyword id="KW-1185">Reference proteome</keyword>
<sequence length="423" mass="46872">MIDLKQLRDDPDRVRESQRTRGEDPGLVDQLLQADQARREAISAADATRAEHKAYTKSMGKKMRDASPEEKENLRAKGTELSNVVKEKEEAQRVAEASVHDLQMQISNIVEGAPAGGEEDFVVVEKVGTPPQFDFEPKDHLELGESLGIIDMERGAKVSGSRFYFLKGAGALLQLGMLQLAAQKAVQHGFELMITPVIVNPESMSGTGFLGQHADEIYYLQEDNQYLVGTSEVALAGYHSKEIIDLSAGPKRYAGWSSCFRREAGSYGKDTRGILRVHQFDKVEMFSYCKPEDAAAEHQKLLSMEREMLAAVEVPYRIIDVAGGDLGSSAARKFDTEAWVPTQNTYRELTSTSNCTTFQARRLGIRYRDENNKTQIAATLNGTLATTRWLVAILENNQQADGSVKVPEALQPYVGQDVLKPVK</sequence>